<dbReference type="EMBL" id="U94497">
    <property type="protein sequence ID" value="AAC61298.1"/>
    <property type="molecule type" value="mRNA"/>
</dbReference>
<dbReference type="SMR" id="O77417"/>
<dbReference type="MEROPS" id="I08.005"/>
<dbReference type="GO" id="GO:0005576">
    <property type="term" value="C:extracellular region"/>
    <property type="evidence" value="ECO:0007669"/>
    <property type="project" value="UniProtKB-SubCell"/>
</dbReference>
<dbReference type="GO" id="GO:0004867">
    <property type="term" value="F:serine-type endopeptidase inhibitor activity"/>
    <property type="evidence" value="ECO:0007669"/>
    <property type="project" value="UniProtKB-KW"/>
</dbReference>
<dbReference type="Gene3D" id="2.10.25.10">
    <property type="entry name" value="Laminin"/>
    <property type="match status" value="1"/>
</dbReference>
<dbReference type="InterPro" id="IPR036084">
    <property type="entry name" value="Ser_inhib-like_sf"/>
</dbReference>
<dbReference type="SUPFAM" id="SSF57567">
    <property type="entry name" value="Serine protease inhibitors"/>
    <property type="match status" value="1"/>
</dbReference>
<evidence type="ECO:0000250" key="1"/>
<evidence type="ECO:0000255" key="2"/>
<accession>O77417</accession>
<proteinExistence type="inferred from homology"/>
<name>ASP2_ANISI</name>
<feature type="signal peptide" evidence="2">
    <location>
        <begin position="1"/>
        <end position="17"/>
    </location>
</feature>
<feature type="chain" id="PRO_0000034307" description="Serine protease inhibitor 2">
    <location>
        <begin position="18"/>
        <end position="77"/>
    </location>
</feature>
<feature type="domain" description="TIL">
    <location>
        <begin position="21"/>
        <end position="74"/>
    </location>
</feature>
<feature type="site" description="Reactive bond" evidence="1">
    <location>
        <begin position="46"/>
        <end position="47"/>
    </location>
</feature>
<feature type="disulfide bond" evidence="1">
    <location>
        <begin position="21"/>
        <end position="53"/>
    </location>
</feature>
<feature type="disulfide bond" evidence="1">
    <location>
        <begin position="30"/>
        <end position="48"/>
    </location>
</feature>
<feature type="disulfide bond" evidence="1">
    <location>
        <begin position="33"/>
        <end position="44"/>
    </location>
</feature>
<feature type="disulfide bond" evidence="1">
    <location>
        <begin position="37"/>
        <end position="74"/>
    </location>
</feature>
<feature type="disulfide bond" evidence="1">
    <location>
        <begin position="55"/>
        <end position="68"/>
    </location>
</feature>
<sequence length="77" mass="8699">MMFTPLIVLTLLVLATAEHQCGPNEQWSDCPKCELQCGESDKPCATICGEPKCYCSPDKYRRIPDGRCIRKIQCPQH</sequence>
<comment type="function">
    <text evidence="1">Defends the organism against the host's proteinases.</text>
</comment>
<comment type="subcellular location">
    <subcellularLocation>
        <location evidence="1">Secreted</location>
    </subcellularLocation>
</comment>
<protein>
    <recommendedName>
        <fullName>Serine protease inhibitor 2</fullName>
    </recommendedName>
    <alternativeName>
        <fullName>ASPI-2</fullName>
    </alternativeName>
</protein>
<keyword id="KW-1015">Disulfide bond</keyword>
<keyword id="KW-0646">Protease inhibitor</keyword>
<keyword id="KW-0964">Secreted</keyword>
<keyword id="KW-0722">Serine protease inhibitor</keyword>
<keyword id="KW-0732">Signal</keyword>
<reference key="1">
    <citation type="journal article" date="1998" name="Exp. Parasitol.">
        <title>Anisakis simplex: mutational bursts in the reactive site centers of serine protease inhibitors from an ascarid nematode.</title>
        <authorList>
            <person name="Lu C.C."/>
            <person name="Nguyen T."/>
            <person name="Morris S."/>
            <person name="Hill D."/>
            <person name="Sakanari J.A."/>
        </authorList>
    </citation>
    <scope>NUCLEOTIDE SEQUENCE [MRNA]</scope>
</reference>
<organism>
    <name type="scientific">Anisakis simplex</name>
    <name type="common">Herring worm</name>
    <dbReference type="NCBI Taxonomy" id="6269"/>
    <lineage>
        <taxon>Eukaryota</taxon>
        <taxon>Metazoa</taxon>
        <taxon>Ecdysozoa</taxon>
        <taxon>Nematoda</taxon>
        <taxon>Chromadorea</taxon>
        <taxon>Rhabditida</taxon>
        <taxon>Spirurina</taxon>
        <taxon>Ascaridomorpha</taxon>
        <taxon>Ascaridoidea</taxon>
        <taxon>Anisakidae</taxon>
        <taxon>Anisakis</taxon>
        <taxon>Anisakis simplex complex</taxon>
    </lineage>
</organism>